<accession>A1CX14</accession>
<gene>
    <name type="primary">xlnC</name>
    <name type="ORF">NFIA_106540</name>
</gene>
<organism>
    <name type="scientific">Neosartorya fischeri (strain ATCC 1020 / DSM 3700 / CBS 544.65 / FGSC A1164 / JCM 1740 / NRRL 181 / WB 181)</name>
    <name type="common">Aspergillus fischerianus</name>
    <dbReference type="NCBI Taxonomy" id="331117"/>
    <lineage>
        <taxon>Eukaryota</taxon>
        <taxon>Fungi</taxon>
        <taxon>Dikarya</taxon>
        <taxon>Ascomycota</taxon>
        <taxon>Pezizomycotina</taxon>
        <taxon>Eurotiomycetes</taxon>
        <taxon>Eurotiomycetidae</taxon>
        <taxon>Eurotiales</taxon>
        <taxon>Aspergillaceae</taxon>
        <taxon>Aspergillus</taxon>
        <taxon>Aspergillus subgen. Fumigati</taxon>
    </lineage>
</organism>
<keyword id="KW-0119">Carbohydrate metabolism</keyword>
<keyword id="KW-1015">Disulfide bond</keyword>
<keyword id="KW-0326">Glycosidase</keyword>
<keyword id="KW-0378">Hydrolase</keyword>
<keyword id="KW-0624">Polysaccharide degradation</keyword>
<keyword id="KW-1185">Reference proteome</keyword>
<keyword id="KW-0964">Secreted</keyword>
<keyword id="KW-0732">Signal</keyword>
<keyword id="KW-0858">Xylan degradation</keyword>
<protein>
    <recommendedName>
        <fullName>Probable endo-1,4-beta-xylanase C</fullName>
        <shortName>Xylanase C</shortName>
        <ecNumber>3.2.1.8</ecNumber>
    </recommendedName>
    <alternativeName>
        <fullName>1,4-beta-D-xylan xylanohydrolase C</fullName>
    </alternativeName>
</protein>
<evidence type="ECO:0000250" key="1"/>
<evidence type="ECO:0000255" key="2"/>
<evidence type="ECO:0000255" key="3">
    <source>
        <dbReference type="PROSITE-ProRule" id="PRU01096"/>
    </source>
</evidence>
<evidence type="ECO:0000305" key="4"/>
<reference key="1">
    <citation type="journal article" date="2008" name="PLoS Genet.">
        <title>Genomic islands in the pathogenic filamentous fungus Aspergillus fumigatus.</title>
        <authorList>
            <person name="Fedorova N.D."/>
            <person name="Khaldi N."/>
            <person name="Joardar V.S."/>
            <person name="Maiti R."/>
            <person name="Amedeo P."/>
            <person name="Anderson M.J."/>
            <person name="Crabtree J."/>
            <person name="Silva J.C."/>
            <person name="Badger J.H."/>
            <person name="Albarraq A."/>
            <person name="Angiuoli S."/>
            <person name="Bussey H."/>
            <person name="Bowyer P."/>
            <person name="Cotty P.J."/>
            <person name="Dyer P.S."/>
            <person name="Egan A."/>
            <person name="Galens K."/>
            <person name="Fraser-Liggett C.M."/>
            <person name="Haas B.J."/>
            <person name="Inman J.M."/>
            <person name="Kent R."/>
            <person name="Lemieux S."/>
            <person name="Malavazi I."/>
            <person name="Orvis J."/>
            <person name="Roemer T."/>
            <person name="Ronning C.M."/>
            <person name="Sundaram J.P."/>
            <person name="Sutton G."/>
            <person name="Turner G."/>
            <person name="Venter J.C."/>
            <person name="White O.R."/>
            <person name="Whitty B.R."/>
            <person name="Youngman P."/>
            <person name="Wolfe K.H."/>
            <person name="Goldman G.H."/>
            <person name="Wortman J.R."/>
            <person name="Jiang B."/>
            <person name="Denning D.W."/>
            <person name="Nierman W.C."/>
        </authorList>
    </citation>
    <scope>NUCLEOTIDE SEQUENCE [LARGE SCALE GENOMIC DNA]</scope>
    <source>
        <strain>ATCC 1020 / DSM 3700 / CBS 544.65 / FGSC A1164 / JCM 1740 / NRRL 181 / WB 181</strain>
    </source>
</reference>
<feature type="signal peptide" evidence="2">
    <location>
        <begin position="1"/>
        <end position="19"/>
    </location>
</feature>
<feature type="chain" id="PRO_0000393195" description="Probable endo-1,4-beta-xylanase C">
    <location>
        <begin position="20"/>
        <end position="314"/>
    </location>
</feature>
<feature type="domain" description="GH10" evidence="3">
    <location>
        <begin position="23"/>
        <end position="313"/>
    </location>
</feature>
<feature type="active site" description="Proton donor" evidence="1">
    <location>
        <position position="154"/>
    </location>
</feature>
<feature type="active site" description="Nucleophile" evidence="1">
    <location>
        <position position="250"/>
    </location>
</feature>
<feature type="disulfide bond" evidence="1">
    <location>
        <begin position="268"/>
        <end position="274"/>
    </location>
</feature>
<proteinExistence type="evidence at transcript level"/>
<comment type="function">
    <text evidence="1">Endo-1,4-beta-xylanase involved in the hydrolysis of xylan, a major structural heterogeneous polysaccharide found in plant biomass representing the second most abundant polysaccharide in the biosphere, after cellulose.</text>
</comment>
<comment type="catalytic activity">
    <reaction>
        <text>Endohydrolysis of (1-&gt;4)-beta-D-xylosidic linkages in xylans.</text>
        <dbReference type="EC" id="3.2.1.8"/>
    </reaction>
</comment>
<comment type="pathway">
    <text>Glycan degradation; xylan degradation.</text>
</comment>
<comment type="subcellular location">
    <subcellularLocation>
        <location evidence="1">Secreted</location>
    </subcellularLocation>
</comment>
<comment type="induction">
    <text>Expressed in presence of xylan and repressed by glucose.</text>
</comment>
<comment type="similarity">
    <text evidence="4">Belongs to the glycosyl hydrolase 10 (cellulase F) family.</text>
</comment>
<dbReference type="EC" id="3.2.1.8"/>
<dbReference type="EMBL" id="DS027685">
    <property type="protein sequence ID" value="EAW25166.1"/>
    <property type="molecule type" value="Genomic_DNA"/>
</dbReference>
<dbReference type="RefSeq" id="XP_001267063.1">
    <property type="nucleotide sequence ID" value="XM_001267062.1"/>
</dbReference>
<dbReference type="SMR" id="A1CX14"/>
<dbReference type="STRING" id="331117.A1CX14"/>
<dbReference type="EnsemblFungi" id="EAW25166">
    <property type="protein sequence ID" value="EAW25166"/>
    <property type="gene ID" value="NFIA_106540"/>
</dbReference>
<dbReference type="GeneID" id="4593532"/>
<dbReference type="KEGG" id="nfi:NFIA_106540"/>
<dbReference type="VEuPathDB" id="FungiDB:NFIA_106540"/>
<dbReference type="eggNOG" id="ENOG502QSCW">
    <property type="taxonomic scope" value="Eukaryota"/>
</dbReference>
<dbReference type="HOGENOM" id="CLU_020161_2_0_1"/>
<dbReference type="OMA" id="PENQMKW"/>
<dbReference type="OrthoDB" id="3055998at2759"/>
<dbReference type="UniPathway" id="UPA00114"/>
<dbReference type="Proteomes" id="UP000006702">
    <property type="component" value="Unassembled WGS sequence"/>
</dbReference>
<dbReference type="GO" id="GO:0005576">
    <property type="term" value="C:extracellular region"/>
    <property type="evidence" value="ECO:0000250"/>
    <property type="project" value="UniProtKB"/>
</dbReference>
<dbReference type="GO" id="GO:0031176">
    <property type="term" value="F:endo-1,4-beta-xylanase activity"/>
    <property type="evidence" value="ECO:0000250"/>
    <property type="project" value="UniProtKB"/>
</dbReference>
<dbReference type="GO" id="GO:0045493">
    <property type="term" value="P:xylan catabolic process"/>
    <property type="evidence" value="ECO:0000250"/>
    <property type="project" value="UniProtKB"/>
</dbReference>
<dbReference type="FunFam" id="3.20.20.80:FF:000094">
    <property type="entry name" value="Endo-1,4-beta-xylanase"/>
    <property type="match status" value="1"/>
</dbReference>
<dbReference type="Gene3D" id="3.20.20.80">
    <property type="entry name" value="Glycosidases"/>
    <property type="match status" value="1"/>
</dbReference>
<dbReference type="InterPro" id="IPR044846">
    <property type="entry name" value="GH10"/>
</dbReference>
<dbReference type="InterPro" id="IPR001000">
    <property type="entry name" value="GH10_dom"/>
</dbReference>
<dbReference type="InterPro" id="IPR017853">
    <property type="entry name" value="Glycoside_hydrolase_SF"/>
</dbReference>
<dbReference type="PANTHER" id="PTHR31490:SF76">
    <property type="entry name" value="ENDO-1,4-BETA-XYLANASE C"/>
    <property type="match status" value="1"/>
</dbReference>
<dbReference type="PANTHER" id="PTHR31490">
    <property type="entry name" value="GLYCOSYL HYDROLASE"/>
    <property type="match status" value="1"/>
</dbReference>
<dbReference type="Pfam" id="PF00331">
    <property type="entry name" value="Glyco_hydro_10"/>
    <property type="match status" value="1"/>
</dbReference>
<dbReference type="PRINTS" id="PR00134">
    <property type="entry name" value="GLHYDRLASE10"/>
</dbReference>
<dbReference type="SMART" id="SM00633">
    <property type="entry name" value="Glyco_10"/>
    <property type="match status" value="1"/>
</dbReference>
<dbReference type="SUPFAM" id="SSF51445">
    <property type="entry name" value="(Trans)glycosidases"/>
    <property type="match status" value="1"/>
</dbReference>
<dbReference type="PROSITE" id="PS51760">
    <property type="entry name" value="GH10_2"/>
    <property type="match status" value="1"/>
</dbReference>
<name>XYNC_NEOFI</name>
<sequence length="314" mass="34254">MVVLSKLISSILFASLVSAAVIERQATSINQAFTSHGKKYFGTASDQRLLQNSQNEAIVRKDFGQLTPENSMKWDATEPSRGSFNFAGADFLVNYAKQNGMKVRGHTLVWHSQLPSWVSAITDKNTLTSVLKNHITTVMTRYKGQIYHWDVVNEIFNEDGSLRDSVFSRVLGEDFVRIAFETARSVDPSAKLYINDYNLDSASYGKTQGMVSHVKKWLAAGIPIDGIGSQTHLALTALASSGVSEVAITELDIAGASSQDYVNVVNACLGVPKCVGITVWGVSDKDSWRSSSSPLLFDSNYQPKAAYNAIIAAL</sequence>